<feature type="chain" id="PRO_0000293983" description="Uncharacterized membrane protein ycf78">
    <location>
        <begin position="1"/>
        <end position="586"/>
    </location>
</feature>
<feature type="transmembrane region" description="Helical" evidence="1">
    <location>
        <begin position="95"/>
        <end position="115"/>
    </location>
</feature>
<feature type="transmembrane region" description="Helical" evidence="1">
    <location>
        <begin position="129"/>
        <end position="151"/>
    </location>
</feature>
<feature type="transmembrane region" description="Helical" evidence="1">
    <location>
        <begin position="155"/>
        <end position="177"/>
    </location>
</feature>
<feature type="transmembrane region" description="Helical" evidence="1">
    <location>
        <begin position="198"/>
        <end position="217"/>
    </location>
</feature>
<feature type="transmembrane region" description="Helical" evidence="1">
    <location>
        <begin position="247"/>
        <end position="267"/>
    </location>
</feature>
<feature type="transmembrane region" description="Helical" evidence="1">
    <location>
        <begin position="284"/>
        <end position="304"/>
    </location>
</feature>
<geneLocation type="non-photosynthetic plastid"/>
<protein>
    <recommendedName>
        <fullName>Uncharacterized membrane protein ycf78</fullName>
    </recommendedName>
    <alternativeName>
        <fullName>ycf1</fullName>
    </alternativeName>
</protein>
<evidence type="ECO:0000255" key="1"/>
<evidence type="ECO:0000305" key="2"/>
<gene>
    <name type="primary">ycf78</name>
    <name type="synonym">ycf1</name>
</gene>
<accession>Q9TJR3</accession>
<comment type="subcellular location">
    <subcellularLocation>
        <location evidence="2">Plastid membrane</location>
        <topology evidence="2">Multi-pass membrane protein</topology>
    </subcellularLocation>
</comment>
<comment type="similarity">
    <text evidence="2">Belongs to the ycf78 family.</text>
</comment>
<name>YCF78_PROWI</name>
<reference key="1">
    <citation type="submission" date="1999-08" db="EMBL/GenBank/DDBJ databases">
        <title>A 22 kb fragment of the 53 kb plastid genome of the colourless alga Prototheka wickerhamii containing atp-, rpl-,rps-, rrn-, and trn-genes.</title>
        <authorList>
            <person name="Knauf U."/>
            <person name="Hachtel W."/>
        </authorList>
    </citation>
    <scope>NUCLEOTIDE SEQUENCE [GENOMIC DNA]</scope>
    <source>
        <strain>263-11</strain>
    </source>
</reference>
<dbReference type="EMBL" id="AJ245645">
    <property type="protein sequence ID" value="CAB53108.1"/>
    <property type="molecule type" value="Genomic_DNA"/>
</dbReference>
<dbReference type="SMR" id="Q9TJR3"/>
<dbReference type="GO" id="GO:0042170">
    <property type="term" value="C:plastid membrane"/>
    <property type="evidence" value="ECO:0007669"/>
    <property type="project" value="UniProtKB-SubCell"/>
</dbReference>
<keyword id="KW-0472">Membrane</keyword>
<keyword id="KW-0934">Plastid</keyword>
<keyword id="KW-0812">Transmembrane</keyword>
<keyword id="KW-1133">Transmembrane helix</keyword>
<organism>
    <name type="scientific">Prototheca wickerhamii</name>
    <dbReference type="NCBI Taxonomy" id="3111"/>
    <lineage>
        <taxon>Eukaryota</taxon>
        <taxon>Viridiplantae</taxon>
        <taxon>Chlorophyta</taxon>
        <taxon>core chlorophytes</taxon>
        <taxon>Trebouxiophyceae</taxon>
        <taxon>Chlorellales</taxon>
        <taxon>Chlorellaceae</taxon>
        <taxon>Prototheca</taxon>
    </lineage>
</organism>
<proteinExistence type="inferred from homology"/>
<sequence>MSLSTHIRDYVEVLTGVTEASGNPLQLAKLISESLLYVLKICQSEVLQILSFQWIRNFSLLPIKIPAIYESIIGQTPPEALFDFVEVLHLGQNPVIAGFLNSAFFALPFSAIHFVSIRRLLTQGVPAAIYSFGGYIIGQILFMSCVIFGVQDIIIPWLTLEPLNYIAGLILLSRIIISMRFESLAELETWDHPKYKNYFIYRFLIAWCEQGSIFQFLSNITPSANPTILQGFAFNNLGLNLVQNFSYIGGLLLGSAAFTLFWMWLFLKIQTYILVHTLYYHHQIVATVNQICFLSALTLSFATLPYYAYNYLLVGPLGFVPEDNALLSTVFTHSYLKDGPKELSFLTEEPIMELKLFPFNKGQYLIFPELYQTLSLEELSYRADYAWVRRVEKFSLDVTATHVGGRKLARRLGFHKLRQSFAKLILPRQTLAMDYRLELNSKYKCEDHDADIKAILDSELTNTRKESSIRGRRYRGDLSYDPTLDRFYQWYDFENVSLESSDQMMNYVTRTSVQGRFLFPQSFIKKEINLGEIHHEIGLRIKQQYNQSLIFRTLLKVDISFLLARQPKKHHLSGDQECDLQIKRNI</sequence>